<keyword id="KW-0274">FAD</keyword>
<keyword id="KW-0285">Flavoprotein</keyword>
<keyword id="KW-0560">Oxidoreductase</keyword>
<keyword id="KW-1185">Reference proteome</keyword>
<feature type="chain" id="PRO_0000441696" description="Hydroxysqualene dehydroxylase">
    <location>
        <begin position="1"/>
        <end position="414"/>
    </location>
</feature>
<feature type="sequence conflict" description="In Ref. 1; CAA56748, 2; CAA04734 and 3; AAF12830." evidence="5" ref="1 2 3">
    <original>E</original>
    <variation>K</variation>
    <location>
        <position position="350"/>
    </location>
</feature>
<evidence type="ECO:0000269" key="1">
    <source>
    </source>
</evidence>
<evidence type="ECO:0000269" key="2">
    <source>
    </source>
</evidence>
<evidence type="ECO:0000303" key="3">
    <source>
    </source>
</evidence>
<evidence type="ECO:0000303" key="4">
    <source>
    </source>
</evidence>
<evidence type="ECO:0000305" key="5"/>
<evidence type="ECO:0000312" key="6">
    <source>
        <dbReference type="EMBL" id="AAV89495.1"/>
    </source>
</evidence>
<organism>
    <name type="scientific">Zymomonas mobilis subsp. mobilis (strain ATCC 31821 / ZM4 / CP4)</name>
    <dbReference type="NCBI Taxonomy" id="264203"/>
    <lineage>
        <taxon>Bacteria</taxon>
        <taxon>Pseudomonadati</taxon>
        <taxon>Pseudomonadota</taxon>
        <taxon>Alphaproteobacteria</taxon>
        <taxon>Sphingomonadales</taxon>
        <taxon>Zymomonadaceae</taxon>
        <taxon>Zymomonas</taxon>
    </lineage>
</organism>
<sequence>MSVTHIIGAGLAGLSAAVAITHAGGRVKIYEASAMAGGRARSYHDKKLGIEIDNGNHMLLSGNHSAKTYLKRIGAEHRFKSPKEAAFSFCDLSDKERFTIKLSNGPLPWWVLCAKSRVPHSKAKDYLALLSLLLADHNTKIGDLVPDNTALWRKLLDPFFVSVLNTPAREGAACLAAAVIRETLMKGGKACIPRIAYPNLASSFIDPALDYLKARGVEVDFRNRLRQIHFSGQDVASLEFAHQDVKLGKGDKVIIALPAWVVQSLIPDIETPDKYQAIINAHFLMKPTAAMPHIMGVVGGTADWIFTFENRISVTISAANHLLALEKEELVKRIWDDIQTVYAFKQDMPEWQVVTEKRATFEATVEQNNRRPPAVTAWNNLFLAGNWVRTGLPATIESAIRSGQTAADLALSHS</sequence>
<proteinExistence type="evidence at protein level"/>
<protein>
    <recommendedName>
        <fullName evidence="3">Hydroxysqualene dehydroxylase</fullName>
        <shortName evidence="3">SQase</shortName>
        <ecNumber evidence="1">1.17.8.1</ecNumber>
    </recommendedName>
</protein>
<gene>
    <name evidence="4" type="primary">hpnE</name>
    <name evidence="6" type="ordered locus">ZMO0871</name>
</gene>
<reference key="1">
    <citation type="journal article" date="1995" name="Microbiology">
        <title>Zymomonas mobilis squalene-hopene cyclase gene (shc): cloning, DNA sequence analysis, and expression in Escherichia coli.</title>
        <authorList>
            <person name="Reipen I.G."/>
            <person name="Poralla K."/>
            <person name="Sahm H."/>
            <person name="Sprenger G.A."/>
        </authorList>
    </citation>
    <scope>NUCLEOTIDE SEQUENCE [GENOMIC DNA]</scope>
    <source>
        <strain>ATCC 31821 / ZM4 / CP4</strain>
    </source>
</reference>
<reference key="2">
    <citation type="journal article" date="1998" name="Biochim. Biophys. Acta">
        <title>Cloning of conserved genes from Zymomonas mobilis and Bradyrhizobium japonicum that function in the biosynthesis of hopanoid lipids.</title>
        <authorList>
            <person name="Perzl M."/>
            <person name="Reipen I.G."/>
            <person name="Schmitz S."/>
            <person name="Poralla K."/>
            <person name="Sahm H."/>
            <person name="Sprenger G.A."/>
            <person name="Kannenberg E.L."/>
        </authorList>
    </citation>
    <scope>NUCLEOTIDE SEQUENCE [GENOMIC DNA]</scope>
    <scope>PATHWAY</scope>
    <source>
        <strain>ATCC 31821 / ZM4 / CP4</strain>
    </source>
</reference>
<reference key="3">
    <citation type="submission" date="1999-11" db="EMBL/GenBank/DDBJ databases">
        <title>Sequence analysis of 43F4 fosmid clone of Zymomonas mobilis.</title>
        <authorList>
            <person name="Um H.W."/>
        </authorList>
    </citation>
    <scope>NUCLEOTIDE SEQUENCE [GENOMIC DNA]</scope>
    <source>
        <strain>ATCC 31821 / ZM4 / CP4</strain>
    </source>
</reference>
<reference key="4">
    <citation type="journal article" date="2005" name="Nat. Biotechnol.">
        <title>The genome sequence of the ethanologenic bacterium Zymomonas mobilis ZM4.</title>
        <authorList>
            <person name="Seo J.-S."/>
            <person name="Chong H."/>
            <person name="Park H.S."/>
            <person name="Yoon K.-O."/>
            <person name="Jung C."/>
            <person name="Kim J.J."/>
            <person name="Hong J.H."/>
            <person name="Kim H."/>
            <person name="Kim J.-H."/>
            <person name="Kil J.-I."/>
            <person name="Park C.J."/>
            <person name="Oh H.-M."/>
            <person name="Lee J.-S."/>
            <person name="Jin S.-J."/>
            <person name="Um H.-W."/>
            <person name="Lee H.-J."/>
            <person name="Oh S.-J."/>
            <person name="Kim J.Y."/>
            <person name="Kang H.L."/>
            <person name="Lee S.Y."/>
            <person name="Lee K.J."/>
            <person name="Kang H.S."/>
        </authorList>
    </citation>
    <scope>NUCLEOTIDE SEQUENCE [LARGE SCALE GENOMIC DNA]</scope>
    <source>
        <strain>ATCC 31821 / ZM4 / CP4</strain>
    </source>
</reference>
<reference key="5">
    <citation type="journal article" date="2015" name="ACS Cent. Sci.">
        <title>Biosynthesis of squalene from farnesyl diphosphate in bacteria: three steps catalyzed by three enzymes.</title>
        <authorList>
            <person name="Pan J.J."/>
            <person name="Solbiati J.O."/>
            <person name="Ramamoorthy G."/>
            <person name="Hillerich B.S."/>
            <person name="Seidel R.D."/>
            <person name="Cronan J.E."/>
            <person name="Almo S.C."/>
            <person name="Poulter C.D."/>
        </authorList>
    </citation>
    <scope>FUNCTION</scope>
    <scope>CATALYTIC ACTIVITY</scope>
    <scope>PATHWAY</scope>
    <source>
        <strain>ATCC 31821 / ZM4 / CP4</strain>
    </source>
</reference>
<dbReference type="EC" id="1.17.8.1" evidence="1"/>
<dbReference type="EMBL" id="X80766">
    <property type="protein sequence ID" value="CAA56748.1"/>
    <property type="molecule type" value="Genomic_DNA"/>
</dbReference>
<dbReference type="EMBL" id="AJ001401">
    <property type="protein sequence ID" value="CAA04734.1"/>
    <property type="molecule type" value="Genomic_DNA"/>
</dbReference>
<dbReference type="EMBL" id="AF203881">
    <property type="protein sequence ID" value="AAF12830.1"/>
    <property type="molecule type" value="Genomic_DNA"/>
</dbReference>
<dbReference type="EMBL" id="AE008692">
    <property type="protein sequence ID" value="AAV89495.1"/>
    <property type="molecule type" value="Genomic_DNA"/>
</dbReference>
<dbReference type="PIR" id="S52618">
    <property type="entry name" value="S52618"/>
</dbReference>
<dbReference type="RefSeq" id="WP_011240737.1">
    <property type="nucleotide sequence ID" value="NZ_CP035711.1"/>
</dbReference>
<dbReference type="SMR" id="Q5NP65"/>
<dbReference type="STRING" id="264203.ZMO0871"/>
<dbReference type="GeneID" id="79903974"/>
<dbReference type="KEGG" id="zmo:ZMO0871"/>
<dbReference type="eggNOG" id="COG1232">
    <property type="taxonomic scope" value="Bacteria"/>
</dbReference>
<dbReference type="HOGENOM" id="CLU_022687_2_1_5"/>
<dbReference type="BRENDA" id="1.17.8.1">
    <property type="organism ID" value="6765"/>
</dbReference>
<dbReference type="UniPathway" id="UPA00337"/>
<dbReference type="Proteomes" id="UP000001173">
    <property type="component" value="Chromosome"/>
</dbReference>
<dbReference type="GO" id="GO:0016491">
    <property type="term" value="F:oxidoreductase activity"/>
    <property type="evidence" value="ECO:0007669"/>
    <property type="project" value="UniProtKB-KW"/>
</dbReference>
<dbReference type="Gene3D" id="3.50.50.60">
    <property type="entry name" value="FAD/NAD(P)-binding domain"/>
    <property type="match status" value="1"/>
</dbReference>
<dbReference type="InterPro" id="IPR002937">
    <property type="entry name" value="Amino_oxidase"/>
</dbReference>
<dbReference type="InterPro" id="IPR036188">
    <property type="entry name" value="FAD/NAD-bd_sf"/>
</dbReference>
<dbReference type="InterPro" id="IPR017830">
    <property type="entry name" value="SQase_HpnE"/>
</dbReference>
<dbReference type="InterPro" id="IPR050464">
    <property type="entry name" value="Zeta_carotene_desat/Oxidored"/>
</dbReference>
<dbReference type="NCBIfam" id="TIGR03467">
    <property type="entry name" value="HpnE"/>
    <property type="match status" value="1"/>
</dbReference>
<dbReference type="PANTHER" id="PTHR42923:SF47">
    <property type="entry name" value="BLR3003 PROTEIN"/>
    <property type="match status" value="1"/>
</dbReference>
<dbReference type="PANTHER" id="PTHR42923">
    <property type="entry name" value="PROTOPORPHYRINOGEN OXIDASE"/>
    <property type="match status" value="1"/>
</dbReference>
<dbReference type="Pfam" id="PF01593">
    <property type="entry name" value="Amino_oxidase"/>
    <property type="match status" value="1"/>
</dbReference>
<dbReference type="SUPFAM" id="SSF51905">
    <property type="entry name" value="FAD/NAD(P)-binding domain"/>
    <property type="match status" value="1"/>
</dbReference>
<name>HPNE_ZYMMO</name>
<comment type="function">
    <text evidence="1">Involved in the biosynthesis of the hopanoid precursor squalene (SQ) from farnesyl diphosphate (FPP). Catalyzes the third (last) step, the reduction of hydroxysqualene (HSQ) to SQ.</text>
</comment>
<comment type="catalytic activity">
    <reaction evidence="1">
        <text>squalene + FAD + H2O + H(+) = hydroxysqualene + FADH2</text>
        <dbReference type="Rhea" id="RHEA:49088"/>
        <dbReference type="ChEBI" id="CHEBI:15377"/>
        <dbReference type="ChEBI" id="CHEBI:15378"/>
        <dbReference type="ChEBI" id="CHEBI:15440"/>
        <dbReference type="ChEBI" id="CHEBI:57692"/>
        <dbReference type="ChEBI" id="CHEBI:58307"/>
        <dbReference type="ChEBI" id="CHEBI:88123"/>
        <dbReference type="EC" id="1.17.8.1"/>
    </reaction>
</comment>
<comment type="pathway">
    <text evidence="1 2">Secondary metabolite biosynthesis; hopanoid biosynthesis.</text>
</comment>
<comment type="similarity">
    <text evidence="5">Belongs to the HpnE family.</text>
</comment>
<accession>Q5NP65</accession>
<accession>Q56996</accession>